<dbReference type="EMBL" id="CP001164">
    <property type="protein sequence ID" value="ACI35532.1"/>
    <property type="molecule type" value="Genomic_DNA"/>
</dbReference>
<dbReference type="RefSeq" id="WP_000091700.1">
    <property type="nucleotide sequence ID" value="NC_011353.1"/>
</dbReference>
<dbReference type="SMR" id="B5YQG1"/>
<dbReference type="KEGG" id="ecf:ECH74115_4266"/>
<dbReference type="HOGENOM" id="CLU_170994_0_0_6"/>
<dbReference type="GO" id="GO:0005829">
    <property type="term" value="C:cytosol"/>
    <property type="evidence" value="ECO:0007669"/>
    <property type="project" value="TreeGrafter"/>
</dbReference>
<dbReference type="GO" id="GO:0005506">
    <property type="term" value="F:iron ion binding"/>
    <property type="evidence" value="ECO:0007669"/>
    <property type="project" value="UniProtKB-UniRule"/>
</dbReference>
<dbReference type="GO" id="GO:0034599">
    <property type="term" value="P:cellular response to oxidative stress"/>
    <property type="evidence" value="ECO:0007669"/>
    <property type="project" value="TreeGrafter"/>
</dbReference>
<dbReference type="FunFam" id="1.10.3880.10:FF:000001">
    <property type="entry name" value="Probable Fe(2+)-trafficking protein"/>
    <property type="match status" value="1"/>
</dbReference>
<dbReference type="Gene3D" id="1.10.3880.10">
    <property type="entry name" value="Fe(II) trafficking protein YggX"/>
    <property type="match status" value="1"/>
</dbReference>
<dbReference type="HAMAP" id="MF_00686">
    <property type="entry name" value="Fe_traffic_YggX"/>
    <property type="match status" value="1"/>
</dbReference>
<dbReference type="InterPro" id="IPR007457">
    <property type="entry name" value="Fe_traffick_prot_YggX"/>
</dbReference>
<dbReference type="InterPro" id="IPR036766">
    <property type="entry name" value="Fe_traffick_prot_YggX_sf"/>
</dbReference>
<dbReference type="NCBIfam" id="NF003817">
    <property type="entry name" value="PRK05408.1"/>
    <property type="match status" value="1"/>
</dbReference>
<dbReference type="PANTHER" id="PTHR36965">
    <property type="entry name" value="FE(2+)-TRAFFICKING PROTEIN-RELATED"/>
    <property type="match status" value="1"/>
</dbReference>
<dbReference type="PANTHER" id="PTHR36965:SF1">
    <property type="entry name" value="FE(2+)-TRAFFICKING PROTEIN-RELATED"/>
    <property type="match status" value="1"/>
</dbReference>
<dbReference type="Pfam" id="PF04362">
    <property type="entry name" value="Iron_traffic"/>
    <property type="match status" value="1"/>
</dbReference>
<dbReference type="PIRSF" id="PIRSF029827">
    <property type="entry name" value="Fe_traffic_YggX"/>
    <property type="match status" value="1"/>
</dbReference>
<dbReference type="SUPFAM" id="SSF111148">
    <property type="entry name" value="YggX-like"/>
    <property type="match status" value="1"/>
</dbReference>
<evidence type="ECO:0000255" key="1">
    <source>
        <dbReference type="HAMAP-Rule" id="MF_00686"/>
    </source>
</evidence>
<name>FETP_ECO5E</name>
<gene>
    <name evidence="1" type="primary">yggX</name>
    <name type="ordered locus">ECH74115_4266</name>
</gene>
<organism>
    <name type="scientific">Escherichia coli O157:H7 (strain EC4115 / EHEC)</name>
    <dbReference type="NCBI Taxonomy" id="444450"/>
    <lineage>
        <taxon>Bacteria</taxon>
        <taxon>Pseudomonadati</taxon>
        <taxon>Pseudomonadota</taxon>
        <taxon>Gammaproteobacteria</taxon>
        <taxon>Enterobacterales</taxon>
        <taxon>Enterobacteriaceae</taxon>
        <taxon>Escherichia</taxon>
    </lineage>
</organism>
<comment type="function">
    <text evidence="1">Could be a mediator in iron transactions between iron acquisition and iron-requiring processes, such as synthesis and/or repair of Fe-S clusters in biosynthetic enzymes.</text>
</comment>
<comment type="subunit">
    <text evidence="1">Monomer.</text>
</comment>
<comment type="similarity">
    <text evidence="1">Belongs to the Fe(2+)-trafficking protein family.</text>
</comment>
<protein>
    <recommendedName>
        <fullName evidence="1">Probable Fe(2+)-trafficking protein</fullName>
    </recommendedName>
</protein>
<proteinExistence type="inferred from homology"/>
<feature type="chain" id="PRO_1000131840" description="Probable Fe(2+)-trafficking protein">
    <location>
        <begin position="1"/>
        <end position="91"/>
    </location>
</feature>
<keyword id="KW-0408">Iron</keyword>
<reference key="1">
    <citation type="journal article" date="2011" name="Proc. Natl. Acad. Sci. U.S.A.">
        <title>Genomic anatomy of Escherichia coli O157:H7 outbreaks.</title>
        <authorList>
            <person name="Eppinger M."/>
            <person name="Mammel M.K."/>
            <person name="Leclerc J.E."/>
            <person name="Ravel J."/>
            <person name="Cebula T.A."/>
        </authorList>
    </citation>
    <scope>NUCLEOTIDE SEQUENCE [LARGE SCALE GENOMIC DNA]</scope>
    <source>
        <strain>EC4115 / EHEC</strain>
    </source>
</reference>
<sequence length="91" mass="10953">MSRTIFCTFLQREAEGQDFQLYPGELGKRIYNEISKEAWAQWQHKQTMLINEKKLNMMNAEHRKLLEQEMVNFLFEGKEVHIEGYTPEDKK</sequence>
<accession>B5YQG1</accession>